<keyword id="KW-0227">DNA damage</keyword>
<keyword id="KW-0234">DNA repair</keyword>
<protein>
    <recommendedName>
        <fullName evidence="1">DNA mismatch repair protein MutL</fullName>
    </recommendedName>
</protein>
<sequence length="623" mass="66783">MTIRHLSETIINQIAAGEVIERPASVIKELVENAIDAGATRIEVVTAGGGKTLLRVTDNGSGIPADELALAVSRHCTSKLTDDVHDIRALGFRGEALPSIGSVSKLTLKSRPQDADSGFEVCVTGGHLDGPRPTALNRGTIVEVRDLFYATPARLKFMKTDRAEATAITDVVKRIGIAFPHIRFSLAGTDRTPFEMPATGTGAEATLERIGQVLGREFGENALAIDAERDGVRLAGFVGIPSFNRGNALHQFAYVNGRPVRDKQIFGALRGAYSDVIARDRHPVAVLFLTLDPALVDVNVHPAKADVRFRDPGLVRGLIVGAIKQALAQSGIRPATSGAEAMLQAFRAEGFGAQQSAPRPANSYSPASWRTAPPAPRSEWSPQTAHPAHRPLDLQAAPALRENGQAVLGDVAVPAADARASVAEAPVELMQKPLGAARAQIHENYIVAQTEDSLVIVDQHAAHERLVYEALKNALHARPIAGQMLLIPEIVDLPEEDAQRLAGHAETLARFGLGVEQFGPGAIAVRETPAMLGEMNVQQLIRDLADEIAEHDTADGLKAMLHHVAATMACHGSVRSGRRLKPEEMNALLRDMEATPGSGTCNHGRPTYIELKLTDIERLFGRR</sequence>
<name>MUTL_BRUSU</name>
<accession>P65490</accession>
<accession>G0KF56</accession>
<accession>Q8YB74</accession>
<comment type="function">
    <text evidence="1">This protein is involved in the repair of mismatches in DNA. It is required for dam-dependent methyl-directed DNA mismatch repair. May act as a 'molecular matchmaker', a protein that promotes the formation of a stable complex between two or more DNA-binding proteins in an ATP-dependent manner without itself being part of a final effector complex.</text>
</comment>
<comment type="similarity">
    <text evidence="1">Belongs to the DNA mismatch repair MutL/HexB family.</text>
</comment>
<reference key="1">
    <citation type="journal article" date="2002" name="Proc. Natl. Acad. Sci. U.S.A.">
        <title>The Brucella suis genome reveals fundamental similarities between animal and plant pathogens and symbionts.</title>
        <authorList>
            <person name="Paulsen I.T."/>
            <person name="Seshadri R."/>
            <person name="Nelson K.E."/>
            <person name="Eisen J.A."/>
            <person name="Heidelberg J.F."/>
            <person name="Read T.D."/>
            <person name="Dodson R.J."/>
            <person name="Umayam L.A."/>
            <person name="Brinkac L.M."/>
            <person name="Beanan M.J."/>
            <person name="Daugherty S.C."/>
            <person name="DeBoy R.T."/>
            <person name="Durkin A.S."/>
            <person name="Kolonay J.F."/>
            <person name="Madupu R."/>
            <person name="Nelson W.C."/>
            <person name="Ayodeji B."/>
            <person name="Kraul M."/>
            <person name="Shetty J."/>
            <person name="Malek J.A."/>
            <person name="Van Aken S.E."/>
            <person name="Riedmuller S."/>
            <person name="Tettelin H."/>
            <person name="Gill S.R."/>
            <person name="White O."/>
            <person name="Salzberg S.L."/>
            <person name="Hoover D.L."/>
            <person name="Lindler L.E."/>
            <person name="Halling S.M."/>
            <person name="Boyle S.M."/>
            <person name="Fraser C.M."/>
        </authorList>
    </citation>
    <scope>NUCLEOTIDE SEQUENCE [LARGE SCALE GENOMIC DNA]</scope>
    <source>
        <strain>1330</strain>
    </source>
</reference>
<reference key="2">
    <citation type="journal article" date="2011" name="J. Bacteriol.">
        <title>Revised genome sequence of Brucella suis 1330.</title>
        <authorList>
            <person name="Tae H."/>
            <person name="Shallom S."/>
            <person name="Settlage R."/>
            <person name="Preston D."/>
            <person name="Adams L.G."/>
            <person name="Garner H.R."/>
        </authorList>
    </citation>
    <scope>NUCLEOTIDE SEQUENCE [LARGE SCALE GENOMIC DNA]</scope>
    <source>
        <strain>1330</strain>
    </source>
</reference>
<proteinExistence type="inferred from homology"/>
<feature type="chain" id="PRO_0000177930" description="DNA mismatch repair protein MutL">
    <location>
        <begin position="1"/>
        <end position="623"/>
    </location>
</feature>
<feature type="region of interest" description="Disordered" evidence="2">
    <location>
        <begin position="353"/>
        <end position="389"/>
    </location>
</feature>
<feature type="compositionally biased region" description="Polar residues" evidence="2">
    <location>
        <begin position="353"/>
        <end position="368"/>
    </location>
</feature>
<gene>
    <name evidence="1" type="primary">mutL</name>
    <name type="ordered locus">BRA0218</name>
    <name type="ordered locus">BS1330_II0215</name>
</gene>
<organism>
    <name type="scientific">Brucella suis biovar 1 (strain 1330)</name>
    <dbReference type="NCBI Taxonomy" id="204722"/>
    <lineage>
        <taxon>Bacteria</taxon>
        <taxon>Pseudomonadati</taxon>
        <taxon>Pseudomonadota</taxon>
        <taxon>Alphaproteobacteria</taxon>
        <taxon>Hyphomicrobiales</taxon>
        <taxon>Brucellaceae</taxon>
        <taxon>Brucella/Ochrobactrum group</taxon>
        <taxon>Brucella</taxon>
    </lineage>
</organism>
<evidence type="ECO:0000255" key="1">
    <source>
        <dbReference type="HAMAP-Rule" id="MF_00149"/>
    </source>
</evidence>
<evidence type="ECO:0000256" key="2">
    <source>
        <dbReference type="SAM" id="MobiDB-lite"/>
    </source>
</evidence>
<dbReference type="EMBL" id="AE014292">
    <property type="protein sequence ID" value="AAN33422.1"/>
    <property type="molecule type" value="Genomic_DNA"/>
</dbReference>
<dbReference type="EMBL" id="CP002998">
    <property type="protein sequence ID" value="AEM19700.1"/>
    <property type="molecule type" value="Genomic_DNA"/>
</dbReference>
<dbReference type="RefSeq" id="WP_002966364.1">
    <property type="nucleotide sequence ID" value="NZ_KN046805.1"/>
</dbReference>
<dbReference type="SMR" id="P65490"/>
<dbReference type="GeneID" id="97535595"/>
<dbReference type="KEGG" id="bms:BRA0218"/>
<dbReference type="KEGG" id="bsi:BS1330_II0215"/>
<dbReference type="PATRIC" id="fig|204722.21.peg.2148"/>
<dbReference type="HOGENOM" id="CLU_004131_4_2_5"/>
<dbReference type="Proteomes" id="UP000007104">
    <property type="component" value="Chromosome II"/>
</dbReference>
<dbReference type="GO" id="GO:0032300">
    <property type="term" value="C:mismatch repair complex"/>
    <property type="evidence" value="ECO:0007669"/>
    <property type="project" value="InterPro"/>
</dbReference>
<dbReference type="GO" id="GO:0005524">
    <property type="term" value="F:ATP binding"/>
    <property type="evidence" value="ECO:0007669"/>
    <property type="project" value="InterPro"/>
</dbReference>
<dbReference type="GO" id="GO:0016887">
    <property type="term" value="F:ATP hydrolysis activity"/>
    <property type="evidence" value="ECO:0007669"/>
    <property type="project" value="InterPro"/>
</dbReference>
<dbReference type="GO" id="GO:0140664">
    <property type="term" value="F:ATP-dependent DNA damage sensor activity"/>
    <property type="evidence" value="ECO:0007669"/>
    <property type="project" value="InterPro"/>
</dbReference>
<dbReference type="GO" id="GO:0030983">
    <property type="term" value="F:mismatched DNA binding"/>
    <property type="evidence" value="ECO:0007669"/>
    <property type="project" value="InterPro"/>
</dbReference>
<dbReference type="GO" id="GO:0006298">
    <property type="term" value="P:mismatch repair"/>
    <property type="evidence" value="ECO:0007669"/>
    <property type="project" value="UniProtKB-UniRule"/>
</dbReference>
<dbReference type="CDD" id="cd16926">
    <property type="entry name" value="HATPase_MutL-MLH-PMS-like"/>
    <property type="match status" value="1"/>
</dbReference>
<dbReference type="CDD" id="cd00782">
    <property type="entry name" value="MutL_Trans"/>
    <property type="match status" value="1"/>
</dbReference>
<dbReference type="FunFam" id="3.30.565.10:FF:000003">
    <property type="entry name" value="DNA mismatch repair endonuclease MutL"/>
    <property type="match status" value="1"/>
</dbReference>
<dbReference type="Gene3D" id="3.30.230.10">
    <property type="match status" value="1"/>
</dbReference>
<dbReference type="Gene3D" id="3.30.565.10">
    <property type="entry name" value="Histidine kinase-like ATPase, C-terminal domain"/>
    <property type="match status" value="1"/>
</dbReference>
<dbReference type="Gene3D" id="3.30.1540.20">
    <property type="entry name" value="MutL, C-terminal domain, dimerisation subdomain"/>
    <property type="match status" value="1"/>
</dbReference>
<dbReference type="Gene3D" id="3.30.1370.100">
    <property type="entry name" value="MutL, C-terminal domain, regulatory subdomain"/>
    <property type="match status" value="1"/>
</dbReference>
<dbReference type="HAMAP" id="MF_00149">
    <property type="entry name" value="DNA_mis_repair"/>
    <property type="match status" value="1"/>
</dbReference>
<dbReference type="InterPro" id="IPR014762">
    <property type="entry name" value="DNA_mismatch_repair_CS"/>
</dbReference>
<dbReference type="InterPro" id="IPR020667">
    <property type="entry name" value="DNA_mismatch_repair_MutL"/>
</dbReference>
<dbReference type="InterPro" id="IPR013507">
    <property type="entry name" value="DNA_mismatch_S5_2-like"/>
</dbReference>
<dbReference type="InterPro" id="IPR036890">
    <property type="entry name" value="HATPase_C_sf"/>
</dbReference>
<dbReference type="InterPro" id="IPR002099">
    <property type="entry name" value="MutL/Mlh/PMS"/>
</dbReference>
<dbReference type="InterPro" id="IPR038973">
    <property type="entry name" value="MutL/Mlh/Pms-like"/>
</dbReference>
<dbReference type="InterPro" id="IPR014790">
    <property type="entry name" value="MutL_C"/>
</dbReference>
<dbReference type="InterPro" id="IPR042120">
    <property type="entry name" value="MutL_C_dimsub"/>
</dbReference>
<dbReference type="InterPro" id="IPR042121">
    <property type="entry name" value="MutL_C_regsub"/>
</dbReference>
<dbReference type="InterPro" id="IPR037198">
    <property type="entry name" value="MutL_C_sf"/>
</dbReference>
<dbReference type="InterPro" id="IPR020568">
    <property type="entry name" value="Ribosomal_Su5_D2-typ_SF"/>
</dbReference>
<dbReference type="InterPro" id="IPR014721">
    <property type="entry name" value="Ribsml_uS5_D2-typ_fold_subgr"/>
</dbReference>
<dbReference type="NCBIfam" id="TIGR00585">
    <property type="entry name" value="mutl"/>
    <property type="match status" value="1"/>
</dbReference>
<dbReference type="NCBIfam" id="NF000953">
    <property type="entry name" value="PRK00095.2-4"/>
    <property type="match status" value="1"/>
</dbReference>
<dbReference type="PANTHER" id="PTHR10073">
    <property type="entry name" value="DNA MISMATCH REPAIR PROTEIN MLH, PMS, MUTL"/>
    <property type="match status" value="1"/>
</dbReference>
<dbReference type="PANTHER" id="PTHR10073:SF12">
    <property type="entry name" value="DNA MISMATCH REPAIR PROTEIN MLH1"/>
    <property type="match status" value="1"/>
</dbReference>
<dbReference type="Pfam" id="PF01119">
    <property type="entry name" value="DNA_mis_repair"/>
    <property type="match status" value="1"/>
</dbReference>
<dbReference type="Pfam" id="PF13589">
    <property type="entry name" value="HATPase_c_3"/>
    <property type="match status" value="1"/>
</dbReference>
<dbReference type="Pfam" id="PF08676">
    <property type="entry name" value="MutL_C"/>
    <property type="match status" value="1"/>
</dbReference>
<dbReference type="SMART" id="SM01340">
    <property type="entry name" value="DNA_mis_repair"/>
    <property type="match status" value="1"/>
</dbReference>
<dbReference type="SMART" id="SM00853">
    <property type="entry name" value="MutL_C"/>
    <property type="match status" value="1"/>
</dbReference>
<dbReference type="SUPFAM" id="SSF55874">
    <property type="entry name" value="ATPase domain of HSP90 chaperone/DNA topoisomerase II/histidine kinase"/>
    <property type="match status" value="1"/>
</dbReference>
<dbReference type="SUPFAM" id="SSF118116">
    <property type="entry name" value="DNA mismatch repair protein MutL"/>
    <property type="match status" value="1"/>
</dbReference>
<dbReference type="SUPFAM" id="SSF54211">
    <property type="entry name" value="Ribosomal protein S5 domain 2-like"/>
    <property type="match status" value="1"/>
</dbReference>
<dbReference type="PROSITE" id="PS00058">
    <property type="entry name" value="DNA_MISMATCH_REPAIR_1"/>
    <property type="match status" value="1"/>
</dbReference>